<proteinExistence type="inferred from homology"/>
<comment type="catalytic activity">
    <reaction evidence="1">
        <text>(2R)-3-phosphoglycerate + ATP = (2R)-3-phospho-glyceroyl phosphate + ADP</text>
        <dbReference type="Rhea" id="RHEA:14801"/>
        <dbReference type="ChEBI" id="CHEBI:30616"/>
        <dbReference type="ChEBI" id="CHEBI:57604"/>
        <dbReference type="ChEBI" id="CHEBI:58272"/>
        <dbReference type="ChEBI" id="CHEBI:456216"/>
        <dbReference type="EC" id="2.7.2.3"/>
    </reaction>
</comment>
<comment type="pathway">
    <text evidence="1">Carbohydrate degradation; glycolysis; pyruvate from D-glyceraldehyde 3-phosphate: step 2/5.</text>
</comment>
<comment type="subunit">
    <text evidence="1">Monomer.</text>
</comment>
<comment type="subcellular location">
    <subcellularLocation>
        <location evidence="1">Cytoplasm</location>
    </subcellularLocation>
</comment>
<comment type="similarity">
    <text evidence="1">Belongs to the phosphoglycerate kinase family.</text>
</comment>
<reference key="1">
    <citation type="journal article" date="2003" name="Proc. Natl. Acad. Sci. U.S.A.">
        <title>Complete genome sequence of the marine planctomycete Pirellula sp. strain 1.</title>
        <authorList>
            <person name="Gloeckner F.O."/>
            <person name="Kube M."/>
            <person name="Bauer M."/>
            <person name="Teeling H."/>
            <person name="Lombardot T."/>
            <person name="Ludwig W."/>
            <person name="Gade D."/>
            <person name="Beck A."/>
            <person name="Borzym K."/>
            <person name="Heitmann K."/>
            <person name="Rabus R."/>
            <person name="Schlesner H."/>
            <person name="Amann R."/>
            <person name="Reinhardt R."/>
        </authorList>
    </citation>
    <scope>NUCLEOTIDE SEQUENCE [LARGE SCALE GENOMIC DNA]</scope>
    <source>
        <strain>DSM 10527 / NCIMB 13988 / SH1</strain>
    </source>
</reference>
<organism>
    <name type="scientific">Rhodopirellula baltica (strain DSM 10527 / NCIMB 13988 / SH1)</name>
    <dbReference type="NCBI Taxonomy" id="243090"/>
    <lineage>
        <taxon>Bacteria</taxon>
        <taxon>Pseudomonadati</taxon>
        <taxon>Planctomycetota</taxon>
        <taxon>Planctomycetia</taxon>
        <taxon>Pirellulales</taxon>
        <taxon>Pirellulaceae</taxon>
        <taxon>Rhodopirellula</taxon>
    </lineage>
</organism>
<feature type="chain" id="PRO_0000145994" description="Phosphoglycerate kinase">
    <location>
        <begin position="1"/>
        <end position="397"/>
    </location>
</feature>
<feature type="binding site" evidence="1">
    <location>
        <begin position="21"/>
        <end position="23"/>
    </location>
    <ligand>
        <name>substrate</name>
    </ligand>
</feature>
<feature type="binding site" evidence="1">
    <location>
        <position position="37"/>
    </location>
    <ligand>
        <name>substrate</name>
    </ligand>
</feature>
<feature type="binding site" evidence="1">
    <location>
        <begin position="60"/>
        <end position="63"/>
    </location>
    <ligand>
        <name>substrate</name>
    </ligand>
</feature>
<feature type="binding site" evidence="1">
    <location>
        <position position="120"/>
    </location>
    <ligand>
        <name>substrate</name>
    </ligand>
</feature>
<feature type="binding site" evidence="1">
    <location>
        <position position="153"/>
    </location>
    <ligand>
        <name>substrate</name>
    </ligand>
</feature>
<feature type="binding site" evidence="1">
    <location>
        <position position="206"/>
    </location>
    <ligand>
        <name>ATP</name>
        <dbReference type="ChEBI" id="CHEBI:30616"/>
    </ligand>
</feature>
<feature type="binding site" evidence="1">
    <location>
        <position position="296"/>
    </location>
    <ligand>
        <name>ATP</name>
        <dbReference type="ChEBI" id="CHEBI:30616"/>
    </ligand>
</feature>
<feature type="binding site" evidence="1">
    <location>
        <position position="327"/>
    </location>
    <ligand>
        <name>ATP</name>
        <dbReference type="ChEBI" id="CHEBI:30616"/>
    </ligand>
</feature>
<feature type="binding site" evidence="1">
    <location>
        <begin position="353"/>
        <end position="356"/>
    </location>
    <ligand>
        <name>ATP</name>
        <dbReference type="ChEBI" id="CHEBI:30616"/>
    </ligand>
</feature>
<sequence>MAKKTIDQIDVQDKTVLMRVDFNVPLDESLAITDDRRIRMALPSIKSVIDRGGKVILMSHLGRPTGGEGDEKYSLAPAAKRLGELLGSTVHFATDTVGDDASSKASSLAAGEVLVLENLRFNPGEKKGDSEFAGKLAAMADAYCNDAFGTCHRKDASMVAVPEAMAGKPRVVGHLVAKEIQYLTDAISKPERPFVAILGGAKVSDKINVINNLLGICDAVLIGGAMAYTFSLASGGKVGKSLVEKDKVELAKELMAKGGDKLQLPVDTHCGDDFGNIAGCNKKVVAAGEIPDDMEGLDIGPETAKKYAEVIKSAKTIVWNGPMGVFEKPPMDEGTKAVAQAIADGDAVSIIGGGDSAAAVDQLGFADDVSHVSTGGGASLAMLEGQAFAAVDLLDEA</sequence>
<keyword id="KW-0067">ATP-binding</keyword>
<keyword id="KW-0963">Cytoplasm</keyword>
<keyword id="KW-0324">Glycolysis</keyword>
<keyword id="KW-0418">Kinase</keyword>
<keyword id="KW-0547">Nucleotide-binding</keyword>
<keyword id="KW-1185">Reference proteome</keyword>
<keyword id="KW-0808">Transferase</keyword>
<evidence type="ECO:0000255" key="1">
    <source>
        <dbReference type="HAMAP-Rule" id="MF_00145"/>
    </source>
</evidence>
<protein>
    <recommendedName>
        <fullName evidence="1">Phosphoglycerate kinase</fullName>
        <ecNumber evidence="1">2.7.2.3</ecNumber>
    </recommendedName>
</protein>
<name>PGK_RHOBA</name>
<gene>
    <name evidence="1" type="primary">pgk</name>
    <name type="ordered locus">RB10500</name>
</gene>
<accession>Q7UEX1</accession>
<dbReference type="EC" id="2.7.2.3" evidence="1"/>
<dbReference type="EMBL" id="BX294151">
    <property type="protein sequence ID" value="CAD78913.1"/>
    <property type="molecule type" value="Genomic_DNA"/>
</dbReference>
<dbReference type="RefSeq" id="NP_869456.1">
    <property type="nucleotide sequence ID" value="NC_005027.1"/>
</dbReference>
<dbReference type="RefSeq" id="WP_011122791.1">
    <property type="nucleotide sequence ID" value="NC_005027.1"/>
</dbReference>
<dbReference type="SMR" id="Q7UEX1"/>
<dbReference type="FunCoup" id="Q7UEX1">
    <property type="interactions" value="469"/>
</dbReference>
<dbReference type="STRING" id="243090.RB10500"/>
<dbReference type="EnsemblBacteria" id="CAD78913">
    <property type="protein sequence ID" value="CAD78913"/>
    <property type="gene ID" value="RB10500"/>
</dbReference>
<dbReference type="KEGG" id="rba:RB10500"/>
<dbReference type="PATRIC" id="fig|243090.15.peg.5074"/>
<dbReference type="eggNOG" id="COG0126">
    <property type="taxonomic scope" value="Bacteria"/>
</dbReference>
<dbReference type="HOGENOM" id="CLU_025427_0_2_0"/>
<dbReference type="InParanoid" id="Q7UEX1"/>
<dbReference type="OrthoDB" id="9808460at2"/>
<dbReference type="UniPathway" id="UPA00109">
    <property type="reaction ID" value="UER00185"/>
</dbReference>
<dbReference type="Proteomes" id="UP000001025">
    <property type="component" value="Chromosome"/>
</dbReference>
<dbReference type="GO" id="GO:0005829">
    <property type="term" value="C:cytosol"/>
    <property type="evidence" value="ECO:0000318"/>
    <property type="project" value="GO_Central"/>
</dbReference>
<dbReference type="GO" id="GO:0043531">
    <property type="term" value="F:ADP binding"/>
    <property type="evidence" value="ECO:0000318"/>
    <property type="project" value="GO_Central"/>
</dbReference>
<dbReference type="GO" id="GO:0005524">
    <property type="term" value="F:ATP binding"/>
    <property type="evidence" value="ECO:0000318"/>
    <property type="project" value="GO_Central"/>
</dbReference>
<dbReference type="GO" id="GO:0004618">
    <property type="term" value="F:phosphoglycerate kinase activity"/>
    <property type="evidence" value="ECO:0000318"/>
    <property type="project" value="GO_Central"/>
</dbReference>
<dbReference type="GO" id="GO:0006094">
    <property type="term" value="P:gluconeogenesis"/>
    <property type="evidence" value="ECO:0000318"/>
    <property type="project" value="GO_Central"/>
</dbReference>
<dbReference type="GO" id="GO:0006096">
    <property type="term" value="P:glycolytic process"/>
    <property type="evidence" value="ECO:0000318"/>
    <property type="project" value="GO_Central"/>
</dbReference>
<dbReference type="FunFam" id="3.40.50.1260:FF:000001">
    <property type="entry name" value="Phosphoglycerate kinase"/>
    <property type="match status" value="1"/>
</dbReference>
<dbReference type="FunFam" id="3.40.50.1260:FF:000011">
    <property type="entry name" value="Phosphoglycerate kinase"/>
    <property type="match status" value="1"/>
</dbReference>
<dbReference type="Gene3D" id="3.40.50.1260">
    <property type="entry name" value="Phosphoglycerate kinase, N-terminal domain"/>
    <property type="match status" value="2"/>
</dbReference>
<dbReference type="HAMAP" id="MF_00145">
    <property type="entry name" value="Phosphoglyc_kinase"/>
    <property type="match status" value="1"/>
</dbReference>
<dbReference type="InterPro" id="IPR001576">
    <property type="entry name" value="Phosphoglycerate_kinase"/>
</dbReference>
<dbReference type="InterPro" id="IPR015911">
    <property type="entry name" value="Phosphoglycerate_kinase_CS"/>
</dbReference>
<dbReference type="InterPro" id="IPR015824">
    <property type="entry name" value="Phosphoglycerate_kinase_N"/>
</dbReference>
<dbReference type="InterPro" id="IPR036043">
    <property type="entry name" value="Phosphoglycerate_kinase_sf"/>
</dbReference>
<dbReference type="PANTHER" id="PTHR11406">
    <property type="entry name" value="PHOSPHOGLYCERATE KINASE"/>
    <property type="match status" value="1"/>
</dbReference>
<dbReference type="PANTHER" id="PTHR11406:SF23">
    <property type="entry name" value="PHOSPHOGLYCERATE KINASE 1, CHLOROPLASTIC-RELATED"/>
    <property type="match status" value="1"/>
</dbReference>
<dbReference type="Pfam" id="PF00162">
    <property type="entry name" value="PGK"/>
    <property type="match status" value="1"/>
</dbReference>
<dbReference type="PIRSF" id="PIRSF000724">
    <property type="entry name" value="Pgk"/>
    <property type="match status" value="1"/>
</dbReference>
<dbReference type="PRINTS" id="PR00477">
    <property type="entry name" value="PHGLYCKINASE"/>
</dbReference>
<dbReference type="SUPFAM" id="SSF53748">
    <property type="entry name" value="Phosphoglycerate kinase"/>
    <property type="match status" value="1"/>
</dbReference>
<dbReference type="PROSITE" id="PS00111">
    <property type="entry name" value="PGLYCERATE_KINASE"/>
    <property type="match status" value="1"/>
</dbReference>